<name>RL20_STAHJ</name>
<proteinExistence type="inferred from homology"/>
<gene>
    <name evidence="1" type="primary">rplT</name>
    <name type="ordered locus">SH1247</name>
</gene>
<protein>
    <recommendedName>
        <fullName evidence="1">Large ribosomal subunit protein bL20</fullName>
    </recommendedName>
    <alternativeName>
        <fullName evidence="2">50S ribosomal protein L20</fullName>
    </alternativeName>
</protein>
<evidence type="ECO:0000255" key="1">
    <source>
        <dbReference type="HAMAP-Rule" id="MF_00382"/>
    </source>
</evidence>
<evidence type="ECO:0000305" key="2"/>
<accession>Q4L719</accession>
<organism>
    <name type="scientific">Staphylococcus haemolyticus (strain JCSC1435)</name>
    <dbReference type="NCBI Taxonomy" id="279808"/>
    <lineage>
        <taxon>Bacteria</taxon>
        <taxon>Bacillati</taxon>
        <taxon>Bacillota</taxon>
        <taxon>Bacilli</taxon>
        <taxon>Bacillales</taxon>
        <taxon>Staphylococcaceae</taxon>
        <taxon>Staphylococcus</taxon>
    </lineage>
</organism>
<keyword id="KW-0687">Ribonucleoprotein</keyword>
<keyword id="KW-0689">Ribosomal protein</keyword>
<keyword id="KW-0694">RNA-binding</keyword>
<keyword id="KW-0699">rRNA-binding</keyword>
<dbReference type="EMBL" id="AP006716">
    <property type="protein sequence ID" value="BAE04556.1"/>
    <property type="molecule type" value="Genomic_DNA"/>
</dbReference>
<dbReference type="RefSeq" id="WP_011275545.1">
    <property type="nucleotide sequence ID" value="NC_007168.1"/>
</dbReference>
<dbReference type="SMR" id="Q4L719"/>
<dbReference type="GeneID" id="93780655"/>
<dbReference type="KEGG" id="sha:SH1247"/>
<dbReference type="eggNOG" id="COG0292">
    <property type="taxonomic scope" value="Bacteria"/>
</dbReference>
<dbReference type="HOGENOM" id="CLU_123265_0_1_9"/>
<dbReference type="OrthoDB" id="9808966at2"/>
<dbReference type="Proteomes" id="UP000000543">
    <property type="component" value="Chromosome"/>
</dbReference>
<dbReference type="GO" id="GO:1990904">
    <property type="term" value="C:ribonucleoprotein complex"/>
    <property type="evidence" value="ECO:0007669"/>
    <property type="project" value="UniProtKB-KW"/>
</dbReference>
<dbReference type="GO" id="GO:0005840">
    <property type="term" value="C:ribosome"/>
    <property type="evidence" value="ECO:0007669"/>
    <property type="project" value="UniProtKB-KW"/>
</dbReference>
<dbReference type="GO" id="GO:0019843">
    <property type="term" value="F:rRNA binding"/>
    <property type="evidence" value="ECO:0007669"/>
    <property type="project" value="UniProtKB-UniRule"/>
</dbReference>
<dbReference type="GO" id="GO:0003735">
    <property type="term" value="F:structural constituent of ribosome"/>
    <property type="evidence" value="ECO:0007669"/>
    <property type="project" value="InterPro"/>
</dbReference>
<dbReference type="GO" id="GO:0000027">
    <property type="term" value="P:ribosomal large subunit assembly"/>
    <property type="evidence" value="ECO:0007669"/>
    <property type="project" value="UniProtKB-UniRule"/>
</dbReference>
<dbReference type="GO" id="GO:0006412">
    <property type="term" value="P:translation"/>
    <property type="evidence" value="ECO:0007669"/>
    <property type="project" value="InterPro"/>
</dbReference>
<dbReference type="CDD" id="cd07026">
    <property type="entry name" value="Ribosomal_L20"/>
    <property type="match status" value="1"/>
</dbReference>
<dbReference type="FunFam" id="1.10.1900.20:FF:000001">
    <property type="entry name" value="50S ribosomal protein L20"/>
    <property type="match status" value="1"/>
</dbReference>
<dbReference type="Gene3D" id="6.10.160.10">
    <property type="match status" value="1"/>
</dbReference>
<dbReference type="Gene3D" id="1.10.1900.20">
    <property type="entry name" value="Ribosomal protein L20"/>
    <property type="match status" value="1"/>
</dbReference>
<dbReference type="HAMAP" id="MF_00382">
    <property type="entry name" value="Ribosomal_bL20"/>
    <property type="match status" value="1"/>
</dbReference>
<dbReference type="InterPro" id="IPR005813">
    <property type="entry name" value="Ribosomal_bL20"/>
</dbReference>
<dbReference type="InterPro" id="IPR049946">
    <property type="entry name" value="RIBOSOMAL_L20_CS"/>
</dbReference>
<dbReference type="InterPro" id="IPR035566">
    <property type="entry name" value="Ribosomal_protein_bL20_C"/>
</dbReference>
<dbReference type="NCBIfam" id="TIGR01032">
    <property type="entry name" value="rplT_bact"/>
    <property type="match status" value="1"/>
</dbReference>
<dbReference type="PANTHER" id="PTHR10986">
    <property type="entry name" value="39S RIBOSOMAL PROTEIN L20"/>
    <property type="match status" value="1"/>
</dbReference>
<dbReference type="Pfam" id="PF00453">
    <property type="entry name" value="Ribosomal_L20"/>
    <property type="match status" value="1"/>
</dbReference>
<dbReference type="PRINTS" id="PR00062">
    <property type="entry name" value="RIBOSOMALL20"/>
</dbReference>
<dbReference type="SUPFAM" id="SSF74731">
    <property type="entry name" value="Ribosomal protein L20"/>
    <property type="match status" value="1"/>
</dbReference>
<dbReference type="PROSITE" id="PS00937">
    <property type="entry name" value="RIBOSOMAL_L20"/>
    <property type="match status" value="1"/>
</dbReference>
<sequence>MPRVKGGTVTRARRKKTIKLAKGYFGAKHTLYKVAKQQVMKSGQYAFRDRRQRKRDFRKLWITRINAAARQHDMSYSRLMNGLKKADININRKMLSEVAISDEKAFAELVSKAKEALK</sequence>
<feature type="chain" id="PRO_0000177231" description="Large ribosomal subunit protein bL20">
    <location>
        <begin position="1"/>
        <end position="118"/>
    </location>
</feature>
<reference key="1">
    <citation type="journal article" date="2005" name="J. Bacteriol.">
        <title>Whole-genome sequencing of Staphylococcus haemolyticus uncovers the extreme plasticity of its genome and the evolution of human-colonizing staphylococcal species.</title>
        <authorList>
            <person name="Takeuchi F."/>
            <person name="Watanabe S."/>
            <person name="Baba T."/>
            <person name="Yuzawa H."/>
            <person name="Ito T."/>
            <person name="Morimoto Y."/>
            <person name="Kuroda M."/>
            <person name="Cui L."/>
            <person name="Takahashi M."/>
            <person name="Ankai A."/>
            <person name="Baba S."/>
            <person name="Fukui S."/>
            <person name="Lee J.C."/>
            <person name="Hiramatsu K."/>
        </authorList>
    </citation>
    <scope>NUCLEOTIDE SEQUENCE [LARGE SCALE GENOMIC DNA]</scope>
    <source>
        <strain>JCSC1435</strain>
    </source>
</reference>
<comment type="function">
    <text evidence="1">Binds directly to 23S ribosomal RNA and is necessary for the in vitro assembly process of the 50S ribosomal subunit. It is not involved in the protein synthesizing functions of that subunit.</text>
</comment>
<comment type="similarity">
    <text evidence="1">Belongs to the bacterial ribosomal protein bL20 family.</text>
</comment>